<comment type="function">
    <text evidence="1 2">Transfers the sialyl residue from CMP-N-acetyl-beta-neuraminate to the terminal galactose residue on sugar chains of glycoproteins and glycolipids. It's alpha-2,3-sialyltransferase activity is specific toward type II glycan chains (Galbeta1-4GlcNAc) on glycoproteins and glycolipids such as neolactosides nLc4Cer and nLc6Cer, whose sialyl-products serve as precursors for the Lewis X antigen (By similarity). Critically involved in the synthesis of functional selectin ligands needed for neutrophil recruitment during inflammation and lymphocyte homing to the lymph nodes (By similarity).</text>
</comment>
<comment type="catalytic activity">
    <reaction evidence="2">
        <text>a neolactoside nLc4Cer(d18:1(4E)) + CMP-N-acetyl-beta-neuraminate = a neolactoside IV(3)-alpha-NeuAc-nLc4Cer(d18:1(4E)) + CMP + H(+)</text>
        <dbReference type="Rhea" id="RHEA:18913"/>
        <dbReference type="ChEBI" id="CHEBI:15378"/>
        <dbReference type="ChEBI" id="CHEBI:17006"/>
        <dbReference type="ChEBI" id="CHEBI:57812"/>
        <dbReference type="ChEBI" id="CHEBI:58665"/>
        <dbReference type="ChEBI" id="CHEBI:60377"/>
        <dbReference type="EC" id="2.4.3.6"/>
    </reaction>
    <physiologicalReaction direction="left-to-right" evidence="2">
        <dbReference type="Rhea" id="RHEA:18914"/>
    </physiologicalReaction>
</comment>
<comment type="catalytic activity">
    <reaction evidence="2">
        <text>a beta-D-galactosyl-(1-&gt;4)-N-acetyl-beta-D-glucosaminyl derivative + CMP-N-acetyl-beta-neuraminate = an N-acetyl-alpha-neuraminyl-(2-&gt;3)-beta-D-galactosyl-(1-&gt;4)-N-acetyl-beta-D-glucosaminyl derivative + CMP + H(+)</text>
        <dbReference type="Rhea" id="RHEA:52316"/>
        <dbReference type="ChEBI" id="CHEBI:15378"/>
        <dbReference type="ChEBI" id="CHEBI:57812"/>
        <dbReference type="ChEBI" id="CHEBI:60377"/>
        <dbReference type="ChEBI" id="CHEBI:133507"/>
        <dbReference type="ChEBI" id="CHEBI:136545"/>
        <dbReference type="EC" id="2.4.3.6"/>
    </reaction>
    <physiologicalReaction direction="left-to-right" evidence="2">
        <dbReference type="Rhea" id="RHEA:52317"/>
    </physiologicalReaction>
</comment>
<comment type="catalytic activity">
    <reaction evidence="2">
        <text>a neolactoside nLc6Cer(d18:1(4E)) + CMP-N-acetyl-beta-neuraminate = a neolactoside VI(3)-alpha-NeuNAc-nLc6Cer(d18:1(4E)) + CMP + H(+)</text>
        <dbReference type="Rhea" id="RHEA:80751"/>
        <dbReference type="ChEBI" id="CHEBI:15378"/>
        <dbReference type="ChEBI" id="CHEBI:57812"/>
        <dbReference type="ChEBI" id="CHEBI:60377"/>
        <dbReference type="ChEBI" id="CHEBI:61610"/>
        <dbReference type="ChEBI" id="CHEBI:144452"/>
    </reaction>
    <physiologicalReaction direction="left-to-right" evidence="2">
        <dbReference type="Rhea" id="RHEA:80752"/>
    </physiologicalReaction>
</comment>
<comment type="subcellular location">
    <subcellularLocation>
        <location evidence="4">Golgi apparatus membrane</location>
        <topology evidence="4">Single-pass type II membrane protein</topology>
    </subcellularLocation>
</comment>
<comment type="similarity">
    <text evidence="4">Belongs to the glycosyltransferase 29 family.</text>
</comment>
<accession>Q6KB54</accession>
<proteinExistence type="evidence at transcript level"/>
<keyword id="KW-0325">Glycoprotein</keyword>
<keyword id="KW-0328">Glycosyltransferase</keyword>
<keyword id="KW-0333">Golgi apparatus</keyword>
<keyword id="KW-0472">Membrane</keyword>
<keyword id="KW-1185">Reference proteome</keyword>
<keyword id="KW-0735">Signal-anchor</keyword>
<keyword id="KW-0808">Transferase</keyword>
<keyword id="KW-0812">Transmembrane</keyword>
<keyword id="KW-1133">Transmembrane helix</keyword>
<evidence type="ECO:0000250" key="1">
    <source>
        <dbReference type="UniProtKB" id="Q8VIB3"/>
    </source>
</evidence>
<evidence type="ECO:0000250" key="2">
    <source>
        <dbReference type="UniProtKB" id="Q9Y274"/>
    </source>
</evidence>
<evidence type="ECO:0000255" key="3"/>
<evidence type="ECO:0000305" key="4"/>
<gene>
    <name type="primary">ST3GAL6</name>
    <name type="synonym">SIAT10</name>
</gene>
<protein>
    <recommendedName>
        <fullName>Type 2 lactosamine alpha-2,3-sialyltransferase</fullName>
        <ecNumber evidence="2">2.4.3.6</ecNumber>
    </recommendedName>
    <alternativeName>
        <fullName>CMP-NeuAc:beta-galactoside alpha-2,3-sialyltransferase VI</fullName>
    </alternativeName>
    <alternativeName>
        <fullName>ST3Gal VI</fullName>
        <shortName>ST3GalVI</shortName>
    </alternativeName>
    <alternativeName>
        <fullName>Sialyltransferase 10</fullName>
    </alternativeName>
</protein>
<organism>
    <name type="scientific">Pan troglodytes</name>
    <name type="common">Chimpanzee</name>
    <dbReference type="NCBI Taxonomy" id="9598"/>
    <lineage>
        <taxon>Eukaryota</taxon>
        <taxon>Metazoa</taxon>
        <taxon>Chordata</taxon>
        <taxon>Craniata</taxon>
        <taxon>Vertebrata</taxon>
        <taxon>Euteleostomi</taxon>
        <taxon>Mammalia</taxon>
        <taxon>Eutheria</taxon>
        <taxon>Euarchontoglires</taxon>
        <taxon>Primates</taxon>
        <taxon>Haplorrhini</taxon>
        <taxon>Catarrhini</taxon>
        <taxon>Hominidae</taxon>
        <taxon>Pan</taxon>
    </lineage>
</organism>
<feature type="chain" id="PRO_0000149307" description="Type 2 lactosamine alpha-2,3-sialyltransferase">
    <location>
        <begin position="1"/>
        <end position="331"/>
    </location>
</feature>
<feature type="topological domain" description="Cytoplasmic" evidence="3">
    <location>
        <begin position="1"/>
        <end position="4"/>
    </location>
</feature>
<feature type="transmembrane region" description="Helical; Signal-anchor for type II membrane protein" evidence="3">
    <location>
        <begin position="5"/>
        <end position="25"/>
    </location>
</feature>
<feature type="topological domain" description="Lumenal" evidence="3">
    <location>
        <begin position="26"/>
        <end position="331"/>
    </location>
</feature>
<feature type="glycosylation site" description="N-linked (GlcNAc...) asparagine" evidence="3">
    <location>
        <position position="129"/>
    </location>
</feature>
<feature type="glycosylation site" description="N-linked (GlcNAc...) asparagine" evidence="3">
    <location>
        <position position="181"/>
    </location>
</feature>
<feature type="glycosylation site" description="N-linked (GlcNAc...) asparagine" evidence="3">
    <location>
        <position position="282"/>
    </location>
</feature>
<feature type="glycosylation site" description="N-linked (GlcNAc...) asparagine" evidence="3">
    <location>
        <position position="295"/>
    </location>
</feature>
<feature type="glycosylation site" description="N-linked (GlcNAc...) asparagine" evidence="3">
    <location>
        <position position="308"/>
    </location>
</feature>
<feature type="glycosylation site" description="N-linked (GlcNAc...) asparagine" evidence="3">
    <location>
        <position position="327"/>
    </location>
</feature>
<dbReference type="EC" id="2.4.3.6" evidence="2"/>
<dbReference type="EMBL" id="AJ744808">
    <property type="protein sequence ID" value="CAG32844.1"/>
    <property type="molecule type" value="mRNA"/>
</dbReference>
<dbReference type="RefSeq" id="NP_001032386.1">
    <property type="nucleotide sequence ID" value="NM_001037309.1"/>
</dbReference>
<dbReference type="RefSeq" id="XP_016795389.1">
    <property type="nucleotide sequence ID" value="XM_016939900.4"/>
</dbReference>
<dbReference type="RefSeq" id="XP_016795390.1">
    <property type="nucleotide sequence ID" value="XM_016939901.4"/>
</dbReference>
<dbReference type="RefSeq" id="XP_016795391.1">
    <property type="nucleotide sequence ID" value="XM_016939902.4"/>
</dbReference>
<dbReference type="RefSeq" id="XP_016795392.1">
    <property type="nucleotide sequence ID" value="XM_016939903.4"/>
</dbReference>
<dbReference type="RefSeq" id="XP_016795393.1">
    <property type="nucleotide sequence ID" value="XM_016939904.4"/>
</dbReference>
<dbReference type="RefSeq" id="XP_016795394.1">
    <property type="nucleotide sequence ID" value="XM_016939905.1"/>
</dbReference>
<dbReference type="RefSeq" id="XP_016795395.1">
    <property type="nucleotide sequence ID" value="XM_016939906.4"/>
</dbReference>
<dbReference type="RefSeq" id="XP_016795396.1">
    <property type="nucleotide sequence ID" value="XM_016939907.4"/>
</dbReference>
<dbReference type="RefSeq" id="XP_054536228.1">
    <property type="nucleotide sequence ID" value="XM_054680253.2"/>
</dbReference>
<dbReference type="RefSeq" id="XP_063661195.1">
    <property type="nucleotide sequence ID" value="XM_063805125.1"/>
</dbReference>
<dbReference type="RefSeq" id="XP_063661196.1">
    <property type="nucleotide sequence ID" value="XM_063805126.1"/>
</dbReference>
<dbReference type="RefSeq" id="XP_063661197.1">
    <property type="nucleotide sequence ID" value="XM_063805127.1"/>
</dbReference>
<dbReference type="RefSeq" id="XP_063661198.1">
    <property type="nucleotide sequence ID" value="XM_063805128.1"/>
</dbReference>
<dbReference type="SMR" id="Q6KB54"/>
<dbReference type="FunCoup" id="Q6KB54">
    <property type="interactions" value="272"/>
</dbReference>
<dbReference type="STRING" id="9598.ENSPTRP00000088948"/>
<dbReference type="CAZy" id="GT29">
    <property type="family name" value="Glycosyltransferase Family 29"/>
</dbReference>
<dbReference type="GlyCosmos" id="Q6KB54">
    <property type="glycosylation" value="6 sites, No reported glycans"/>
</dbReference>
<dbReference type="PaxDb" id="9598-ENSPTRP00000026151"/>
<dbReference type="Ensembl" id="ENSPTRT00000076793.1">
    <property type="protein sequence ID" value="ENSPTRP00000075980.1"/>
    <property type="gene ID" value="ENSPTRG00000015153.7"/>
</dbReference>
<dbReference type="GeneID" id="460547"/>
<dbReference type="KEGG" id="ptr:460547"/>
<dbReference type="CTD" id="10402"/>
<dbReference type="VGNC" id="VGNC:2592">
    <property type="gene designation" value="ST3GAL6"/>
</dbReference>
<dbReference type="eggNOG" id="KOG2692">
    <property type="taxonomic scope" value="Eukaryota"/>
</dbReference>
<dbReference type="GeneTree" id="ENSGT00940000161415"/>
<dbReference type="InParanoid" id="Q6KB54"/>
<dbReference type="Proteomes" id="UP000002277">
    <property type="component" value="Chromosome 3"/>
</dbReference>
<dbReference type="Bgee" id="ENSPTRG00000015153">
    <property type="expression patterns" value="Expressed in skeletal muscle tissue and 21 other cell types or tissues"/>
</dbReference>
<dbReference type="GO" id="GO:0000139">
    <property type="term" value="C:Golgi membrane"/>
    <property type="evidence" value="ECO:0007669"/>
    <property type="project" value="UniProtKB-SubCell"/>
</dbReference>
<dbReference type="GO" id="GO:0008118">
    <property type="term" value="F:N-acetyllactosaminide alpha-2,3-sialyltransferase activity"/>
    <property type="evidence" value="ECO:0000250"/>
    <property type="project" value="UniProtKB"/>
</dbReference>
<dbReference type="GO" id="GO:0008373">
    <property type="term" value="F:sialyltransferase activity"/>
    <property type="evidence" value="ECO:0000318"/>
    <property type="project" value="GO_Central"/>
</dbReference>
<dbReference type="GO" id="GO:0071354">
    <property type="term" value="P:cellular response to interleukin-6"/>
    <property type="evidence" value="ECO:0000250"/>
    <property type="project" value="UniProtKB"/>
</dbReference>
<dbReference type="GO" id="GO:0009247">
    <property type="term" value="P:glycolipid biosynthetic process"/>
    <property type="evidence" value="ECO:0000250"/>
    <property type="project" value="UniProtKB"/>
</dbReference>
<dbReference type="GO" id="GO:0006486">
    <property type="term" value="P:protein glycosylation"/>
    <property type="evidence" value="ECO:0000250"/>
    <property type="project" value="UniProtKB"/>
</dbReference>
<dbReference type="CDD" id="cd23984">
    <property type="entry name" value="GT29_ST3GAL6"/>
    <property type="match status" value="1"/>
</dbReference>
<dbReference type="FunFam" id="3.90.1480.20:FF:000007">
    <property type="entry name" value="Type 2 lactosamine alpha-2,3-sialyltransferase"/>
    <property type="match status" value="1"/>
</dbReference>
<dbReference type="Gene3D" id="3.90.1480.20">
    <property type="entry name" value="Glycosyl transferase family 29"/>
    <property type="match status" value="1"/>
</dbReference>
<dbReference type="InterPro" id="IPR001675">
    <property type="entry name" value="Glyco_trans_29"/>
</dbReference>
<dbReference type="InterPro" id="IPR051142">
    <property type="entry name" value="Glycosyltransferase_29"/>
</dbReference>
<dbReference type="InterPro" id="IPR038578">
    <property type="entry name" value="GT29-like_sf"/>
</dbReference>
<dbReference type="InterPro" id="IPR012163">
    <property type="entry name" value="Sialyl_trans"/>
</dbReference>
<dbReference type="PANTHER" id="PTHR13713">
    <property type="entry name" value="SIALYLTRANSFERASE"/>
    <property type="match status" value="1"/>
</dbReference>
<dbReference type="PANTHER" id="PTHR13713:SF8">
    <property type="entry name" value="TYPE 2 LACTOSAMINE ALPHA-2,3-SIALYLTRANSFERASE"/>
    <property type="match status" value="1"/>
</dbReference>
<dbReference type="Pfam" id="PF00777">
    <property type="entry name" value="Glyco_transf_29"/>
    <property type="match status" value="1"/>
</dbReference>
<dbReference type="PIRSF" id="PIRSF005557">
    <property type="entry name" value="Sialyl_trans"/>
    <property type="match status" value="1"/>
</dbReference>
<sequence>MRGYLVAIFLSAVFLYYVLHCILWGTNVYWVAPVEMKRRNKIQPCLSKPAFASLLRFHQFHPFLCAADFRKIASLYGSDKFDLPYGMRTSAEYFRLALSKLQSCDLFDEFDNIPCKKCVVVGNGGVLKNKTLGEKIDSYDVIIRMNNGPVLGHEEEVGRRTTFRLFYPESVFSDPIHNDPNTTMILTAFKPHDLRWLLELLMGDKINTNGFWKKPALNLIYKPYQIRILDPFIIRTAAYELLHFPKVFPKNQKPKHPTTGIIAITLAFYICHEVHLAGFKYNFSDLKSPLHYYGNATMSLMNKNAYHNVTAEQLFLKDIIEKNLVINLTQD</sequence>
<reference key="1">
    <citation type="submission" date="2004-06" db="EMBL/GenBank/DDBJ databases">
        <title>Phylogeny of sialyltransferases.</title>
        <authorList>
            <person name="Harduin-Lepers A."/>
            <person name="Martinez-Duncker I."/>
            <person name="Mollicone R."/>
            <person name="Delannoy P."/>
            <person name="Oriol R."/>
        </authorList>
    </citation>
    <scope>NUCLEOTIDE SEQUENCE [MRNA]</scope>
</reference>
<name>SIA10_PANTR</name>